<dbReference type="EMBL" id="X74838">
    <property type="protein sequence ID" value="CAA52832.1"/>
    <property type="molecule type" value="Genomic_DNA"/>
</dbReference>
<dbReference type="EMBL" id="BX284605">
    <property type="protein sequence ID" value="CAB03133.1"/>
    <property type="molecule type" value="Genomic_DNA"/>
</dbReference>
<dbReference type="PIR" id="S37108">
    <property type="entry name" value="S37108"/>
</dbReference>
<dbReference type="PIR" id="T22572">
    <property type="entry name" value="T22572"/>
</dbReference>
<dbReference type="RefSeq" id="NP_506325.1">
    <property type="nucleotide sequence ID" value="NM_073924.3"/>
</dbReference>
<dbReference type="BioGRID" id="44840">
    <property type="interactions" value="2"/>
</dbReference>
<dbReference type="FunCoup" id="P34682">
    <property type="interactions" value="7"/>
</dbReference>
<dbReference type="STRING" id="6239.F53F1.5.2"/>
<dbReference type="PaxDb" id="6239-F53F1.5"/>
<dbReference type="PeptideAtlas" id="P34682"/>
<dbReference type="EnsemblMetazoa" id="F53F1.5.1">
    <property type="protein sequence ID" value="F53F1.5.1"/>
    <property type="gene ID" value="WBGene00009983"/>
</dbReference>
<dbReference type="GeneID" id="179823"/>
<dbReference type="KEGG" id="cel:CELE_F53F1.5"/>
<dbReference type="UCSC" id="F53F1.5">
    <property type="organism name" value="c. elegans"/>
</dbReference>
<dbReference type="AGR" id="WB:WBGene00009983"/>
<dbReference type="CTD" id="179823"/>
<dbReference type="WormBase" id="F53F1.5">
    <property type="protein sequence ID" value="CE10940"/>
    <property type="gene ID" value="WBGene00009983"/>
    <property type="gene designation" value="cut-2"/>
</dbReference>
<dbReference type="eggNOG" id="ENOG502QV05">
    <property type="taxonomic scope" value="Eukaryota"/>
</dbReference>
<dbReference type="HOGENOM" id="CLU_119207_0_0_1"/>
<dbReference type="InParanoid" id="P34682"/>
<dbReference type="PRO" id="PR:P34682"/>
<dbReference type="Proteomes" id="UP000001940">
    <property type="component" value="Chromosome V"/>
</dbReference>
<dbReference type="Bgee" id="WBGene00009983">
    <property type="expression patterns" value="Expressed in pharyngeal muscle cell (C elegans) and 3 other cell types or tissues"/>
</dbReference>
<dbReference type="GO" id="GO:0060106">
    <property type="term" value="C:cortical layer of collagen and cuticulin-based cuticle extracellular matrix"/>
    <property type="evidence" value="ECO:0000303"/>
    <property type="project" value="WormBase"/>
</dbReference>
<dbReference type="GO" id="GO:0005576">
    <property type="term" value="C:extracellular region"/>
    <property type="evidence" value="ECO:0007669"/>
    <property type="project" value="UniProtKB-SubCell"/>
</dbReference>
<dbReference type="GO" id="GO:0042302">
    <property type="term" value="F:structural constituent of cuticle"/>
    <property type="evidence" value="ECO:0007669"/>
    <property type="project" value="UniProtKB-KW"/>
</dbReference>
<protein>
    <recommendedName>
        <fullName evidence="5">Cuticlin 2</fullName>
    </recommendedName>
</protein>
<gene>
    <name evidence="5" type="primary">cut-2</name>
    <name evidence="5" type="ORF">F53F1.5</name>
</gene>
<feature type="signal peptide" evidence="1">
    <location>
        <begin position="1"/>
        <end position="16"/>
    </location>
</feature>
<feature type="chain" id="PRO_0000021047" description="Cuticlin 2">
    <location>
        <begin position="17"/>
        <end position="231"/>
    </location>
</feature>
<feature type="repeat" description="1" evidence="4">
    <location>
        <begin position="75"/>
        <end position="78"/>
    </location>
</feature>
<feature type="repeat" description="2" evidence="4">
    <location>
        <begin position="79"/>
        <end position="82"/>
    </location>
</feature>
<feature type="repeat" description="3" evidence="4">
    <location>
        <begin position="90"/>
        <end position="93"/>
    </location>
</feature>
<feature type="repeat" description="4" evidence="4">
    <location>
        <begin position="105"/>
        <end position="108"/>
    </location>
</feature>
<feature type="repeat" description="5" evidence="4">
    <location>
        <begin position="114"/>
        <end position="117"/>
    </location>
</feature>
<feature type="repeat" description="6" evidence="4">
    <location>
        <begin position="121"/>
        <end position="124"/>
    </location>
</feature>
<feature type="repeat" description="7" evidence="4">
    <location>
        <begin position="137"/>
        <end position="140"/>
    </location>
</feature>
<feature type="repeat" description="8" evidence="4">
    <location>
        <begin position="153"/>
        <end position="156"/>
    </location>
</feature>
<feature type="repeat" description="9" evidence="4">
    <location>
        <begin position="169"/>
        <end position="172"/>
    </location>
</feature>
<feature type="repeat" description="10" evidence="4">
    <location>
        <begin position="192"/>
        <end position="195"/>
    </location>
</feature>
<feature type="repeat" description="11" evidence="4">
    <location>
        <begin position="208"/>
        <end position="211"/>
    </location>
</feature>
<feature type="repeat" description="12" evidence="4">
    <location>
        <begin position="218"/>
        <end position="221"/>
    </location>
</feature>
<feature type="region of interest" description="12 X 4 AA repeats of A-A-P-[AVI]" evidence="4">
    <location>
        <begin position="75"/>
        <end position="221"/>
    </location>
</feature>
<feature type="sequence conflict" description="In Ref. 2; CAB03133." evidence="3" ref="2">
    <location>
        <begin position="148"/>
        <end position="163"/>
    </location>
</feature>
<accession>P34682</accession>
<accession>P92003</accession>
<organism>
    <name type="scientific">Caenorhabditis elegans</name>
    <dbReference type="NCBI Taxonomy" id="6239"/>
    <lineage>
        <taxon>Eukaryota</taxon>
        <taxon>Metazoa</taxon>
        <taxon>Ecdysozoa</taxon>
        <taxon>Nematoda</taxon>
        <taxon>Chromadorea</taxon>
        <taxon>Rhabditida</taxon>
        <taxon>Rhabditina</taxon>
        <taxon>Rhabditomorpha</taxon>
        <taxon>Rhabditoidea</taxon>
        <taxon>Rhabditidae</taxon>
        <taxon>Peloderinae</taxon>
        <taxon>Caenorhabditis</taxon>
    </lineage>
</organism>
<reference key="1">
    <citation type="journal article" date="1994" name="Mol. Biochem. Parasitol.">
        <title>The role of dityrosine formation in the crosslinking of CUT-2, the product of a second cuticlin gene of Caenorhabditis elegans.</title>
        <authorList>
            <person name="Lassandro F."/>
            <person name="Sebastiano M."/>
            <person name="Zei F."/>
            <person name="Bazzicalupo P."/>
        </authorList>
    </citation>
    <scope>NUCLEOTIDE SEQUENCE [GENOMIC DNA]</scope>
    <scope>FUNCTION</scope>
    <scope>SUBCELLULAR LOCATION</scope>
    <scope>DEVELOPMENTAL STAGE</scope>
    <scope>DOMAIN</scope>
    <scope>TYROSINE CROSS-LINKED</scope>
    <source>
        <strain>Bristol N2</strain>
    </source>
</reference>
<reference key="2">
    <citation type="journal article" date="1998" name="Science">
        <title>Genome sequence of the nematode C. elegans: a platform for investigating biology.</title>
        <authorList>
            <consortium name="The C. elegans sequencing consortium"/>
        </authorList>
    </citation>
    <scope>NUCLEOTIDE SEQUENCE [LARGE SCALE GENOMIC DNA]</scope>
    <source>
        <strain>Bristol N2</strain>
    </source>
</reference>
<sequence>MQKLIVFFTTIAAAQAFLLPSGGGGGCGCAPPPPPPPCGCGAPALPPLQLPRFELPRLSLPSLGGGCGGPAPCAAAPIAAPAGGYATAPAAPVGGYATGPAFGGAAPIGGAYQAAPAFVGAAPVGGAYQSGPAFGGAAPAGGAYQSGPAFGGAAPAGGAYQSGPAFGGAAPAVGGAYQAGQAAVESAPLGGAAPAGGYQASAPAAVEAAPAAGGYQAAAPAGGAYAGHKKN</sequence>
<comment type="function">
    <text evidence="2">Component of the insoluble part of the cuticles.</text>
</comment>
<comment type="subcellular location">
    <subcellularLocation>
        <location evidence="4">Secreted</location>
    </subcellularLocation>
</comment>
<comment type="developmental stage">
    <text evidence="2">Expressed before the L1 to L2 stage molt.</text>
</comment>
<comment type="domain">
    <text evidence="4">The small repeats A-A-P-[AVI] are also present in many proteins constituting the protective envelope of other species.</text>
</comment>
<comment type="PTM">
    <text evidence="2">Tyrosine residues can be cross-linked in vitro, leading to the formation of insoluble high molecular-weight complexes.</text>
</comment>
<name>CUT2_CAEEL</name>
<keyword id="KW-0193">Cuticle</keyword>
<keyword id="KW-1185">Reference proteome</keyword>
<keyword id="KW-0677">Repeat</keyword>
<keyword id="KW-0964">Secreted</keyword>
<keyword id="KW-0732">Signal</keyword>
<evidence type="ECO:0000255" key="1"/>
<evidence type="ECO:0000269" key="2">
    <source>
    </source>
</evidence>
<evidence type="ECO:0000305" key="3"/>
<evidence type="ECO:0000305" key="4">
    <source>
    </source>
</evidence>
<evidence type="ECO:0000312" key="5">
    <source>
        <dbReference type="WormBase" id="F53F1.5"/>
    </source>
</evidence>
<proteinExistence type="evidence at transcript level"/>